<sequence length="452" mass="51922">MERRIFGIETEYGVTCTFRGQRRLSPDEVARYLFRRVVSWGRSSNVFLRNGSRLYLDVGSHPEYATAECDDLSELVVHDKAGERILEGLLVDAEQRLAEEGVTGDIYLFKNNTDSAGNSYGCHENYLVGRHGEFSRLADVLIPFLVSRQIVVGAGKVLQTPRGAIYCISQRAEHIWEGVSSATTRSRPIINTRDEPHADAERYRRLHVIVGDSNMNETTTLLKVAVTDLVLRMIEAGVPIRDMTLENPIRAIREISHDMTGRRKVRLANGKEMSALEIQSEYHSRAAEFVDREGFGPVHRQMLELWGRVLKAVDTGDLSLIDREIDWATKYQLIERYRAKRDLPMSSPRIAQMDLAYHDISRTRGLYYLLERNNQVDRVAHEPRVFEAKNVPPQTTRARLRGEFIRRAQEKRRDFTVDWVHLKLNDQAQRTVLCKDPFKAVDERVDKLIASM</sequence>
<comment type="function">
    <text evidence="1">Catalyzes the covalent attachment of the prokaryotic ubiquitin-like protein modifier Pup to the proteasomal substrate proteins, thereby targeting them for proteasomal degradation. This tagging system is termed pupylation. The ligation reaction involves the side-chain carboxylate of the C-terminal glutamate of Pup and the side-chain amino group of a substrate lysine.</text>
</comment>
<comment type="catalytic activity">
    <reaction evidence="1">
        <text>ATP + [prokaryotic ubiquitin-like protein]-L-glutamate + [protein]-L-lysine = ADP + phosphate + N(6)-([prokaryotic ubiquitin-like protein]-gamma-L-glutamyl)-[protein]-L-lysine.</text>
        <dbReference type="EC" id="6.3.1.19"/>
    </reaction>
</comment>
<comment type="pathway">
    <text evidence="1">Protein degradation; proteasomal Pup-dependent pathway.</text>
</comment>
<comment type="pathway">
    <text evidence="1">Protein modification; protein pupylation.</text>
</comment>
<comment type="miscellaneous">
    <text evidence="1">The reaction mechanism probably proceeds via the activation of Pup by phosphorylation of its C-terminal glutamate, which is then subject to nucleophilic attack by the substrate lysine, resulting in an isopeptide bond and the release of phosphate as a good leaving group.</text>
</comment>
<comment type="similarity">
    <text evidence="1">Belongs to the Pup ligase/Pup deamidase family. Pup-conjugating enzyme subfamily.</text>
</comment>
<protein>
    <recommendedName>
        <fullName evidence="1">Pup--protein ligase</fullName>
        <ecNumber evidence="1">6.3.1.19</ecNumber>
    </recommendedName>
    <alternativeName>
        <fullName evidence="1">Proteasome accessory factor A</fullName>
    </alternativeName>
    <alternativeName>
        <fullName evidence="1">Pup-conjugating enzyme</fullName>
    </alternativeName>
</protein>
<feature type="chain" id="PRO_0000395916" description="Pup--protein ligase">
    <location>
        <begin position="1"/>
        <end position="452"/>
    </location>
</feature>
<feature type="active site" description="Proton acceptor" evidence="1">
    <location>
        <position position="57"/>
    </location>
</feature>
<feature type="binding site" evidence="1">
    <location>
        <position position="9"/>
    </location>
    <ligand>
        <name>Mg(2+)</name>
        <dbReference type="ChEBI" id="CHEBI:18420"/>
    </ligand>
</feature>
<feature type="binding site" evidence="1">
    <location>
        <position position="53"/>
    </location>
    <ligand>
        <name>ATP</name>
        <dbReference type="ChEBI" id="CHEBI:30616"/>
    </ligand>
</feature>
<feature type="binding site" evidence="1">
    <location>
        <position position="55"/>
    </location>
    <ligand>
        <name>Mg(2+)</name>
        <dbReference type="ChEBI" id="CHEBI:18420"/>
    </ligand>
</feature>
<feature type="binding site" evidence="1">
    <location>
        <position position="63"/>
    </location>
    <ligand>
        <name>Mg(2+)</name>
        <dbReference type="ChEBI" id="CHEBI:18420"/>
    </ligand>
</feature>
<feature type="binding site" evidence="1">
    <location>
        <position position="66"/>
    </location>
    <ligand>
        <name>ATP</name>
        <dbReference type="ChEBI" id="CHEBI:30616"/>
    </ligand>
</feature>
<feature type="binding site" evidence="1">
    <location>
        <position position="419"/>
    </location>
    <ligand>
        <name>ATP</name>
        <dbReference type="ChEBI" id="CHEBI:30616"/>
    </ligand>
</feature>
<proteinExistence type="inferred from homology"/>
<organism>
    <name type="scientific">Geodermatophilus obscurus (strain ATCC 25078 / DSM 43160 / JCM 3152 / CCUG 61914 / KCC A-0152 / KCTC 9177 / NBRC 13315 / NRRL B-3577 / G-20)</name>
    <dbReference type="NCBI Taxonomy" id="526225"/>
    <lineage>
        <taxon>Bacteria</taxon>
        <taxon>Bacillati</taxon>
        <taxon>Actinomycetota</taxon>
        <taxon>Actinomycetes</taxon>
        <taxon>Geodermatophilales</taxon>
        <taxon>Geodermatophilaceae</taxon>
        <taxon>Geodermatophilus</taxon>
    </lineage>
</organism>
<keyword id="KW-0067">ATP-binding</keyword>
<keyword id="KW-0436">Ligase</keyword>
<keyword id="KW-0460">Magnesium</keyword>
<keyword id="KW-0479">Metal-binding</keyword>
<keyword id="KW-0547">Nucleotide-binding</keyword>
<keyword id="KW-1185">Reference proteome</keyword>
<keyword id="KW-0833">Ubl conjugation pathway</keyword>
<evidence type="ECO:0000255" key="1">
    <source>
        <dbReference type="HAMAP-Rule" id="MF_02111"/>
    </source>
</evidence>
<accession>D2S6E4</accession>
<gene>
    <name evidence="1" type="primary">pafA</name>
    <name type="ordered locus">Gobs_2684</name>
</gene>
<dbReference type="EC" id="6.3.1.19" evidence="1"/>
<dbReference type="EMBL" id="CP001867">
    <property type="protein sequence ID" value="ADB75318.1"/>
    <property type="molecule type" value="Genomic_DNA"/>
</dbReference>
<dbReference type="RefSeq" id="WP_012948751.1">
    <property type="nucleotide sequence ID" value="NZ_BAABTB010000021.1"/>
</dbReference>
<dbReference type="SMR" id="D2S6E4"/>
<dbReference type="STRING" id="526225.Gobs_2684"/>
<dbReference type="MEROPS" id="U72.001"/>
<dbReference type="KEGG" id="gob:Gobs_2684"/>
<dbReference type="eggNOG" id="COG0638">
    <property type="taxonomic scope" value="Bacteria"/>
</dbReference>
<dbReference type="HOGENOM" id="CLU_040524_0_1_11"/>
<dbReference type="OrthoDB" id="9760627at2"/>
<dbReference type="UniPathway" id="UPA00997"/>
<dbReference type="UniPathway" id="UPA00998"/>
<dbReference type="Proteomes" id="UP000001382">
    <property type="component" value="Chromosome"/>
</dbReference>
<dbReference type="GO" id="GO:0005524">
    <property type="term" value="F:ATP binding"/>
    <property type="evidence" value="ECO:0007669"/>
    <property type="project" value="UniProtKB-UniRule"/>
</dbReference>
<dbReference type="GO" id="GO:0016879">
    <property type="term" value="F:ligase activity, forming carbon-nitrogen bonds"/>
    <property type="evidence" value="ECO:0007669"/>
    <property type="project" value="InterPro"/>
</dbReference>
<dbReference type="GO" id="GO:0000287">
    <property type="term" value="F:magnesium ion binding"/>
    <property type="evidence" value="ECO:0007669"/>
    <property type="project" value="UniProtKB-UniRule"/>
</dbReference>
<dbReference type="GO" id="GO:0019787">
    <property type="term" value="F:ubiquitin-like protein transferase activity"/>
    <property type="evidence" value="ECO:0007669"/>
    <property type="project" value="UniProtKB-UniRule"/>
</dbReference>
<dbReference type="GO" id="GO:0019941">
    <property type="term" value="P:modification-dependent protein catabolic process"/>
    <property type="evidence" value="ECO:0007669"/>
    <property type="project" value="UniProtKB-UniRule"/>
</dbReference>
<dbReference type="GO" id="GO:0010498">
    <property type="term" value="P:proteasomal protein catabolic process"/>
    <property type="evidence" value="ECO:0007669"/>
    <property type="project" value="UniProtKB-UniRule"/>
</dbReference>
<dbReference type="GO" id="GO:0070490">
    <property type="term" value="P:protein pupylation"/>
    <property type="evidence" value="ECO:0007669"/>
    <property type="project" value="UniProtKB-UniRule"/>
</dbReference>
<dbReference type="HAMAP" id="MF_02111">
    <property type="entry name" value="Pup_ligase"/>
    <property type="match status" value="1"/>
</dbReference>
<dbReference type="InterPro" id="IPR022279">
    <property type="entry name" value="Pup_ligase"/>
</dbReference>
<dbReference type="InterPro" id="IPR004347">
    <property type="entry name" value="Pup_ligase/deamidase"/>
</dbReference>
<dbReference type="NCBIfam" id="TIGR03686">
    <property type="entry name" value="pupylate_PafA"/>
    <property type="match status" value="1"/>
</dbReference>
<dbReference type="PANTHER" id="PTHR42307">
    <property type="entry name" value="PUP DEAMIDASE/DEPUPYLASE"/>
    <property type="match status" value="1"/>
</dbReference>
<dbReference type="PANTHER" id="PTHR42307:SF3">
    <property type="entry name" value="PUP--PROTEIN LIGASE"/>
    <property type="match status" value="1"/>
</dbReference>
<dbReference type="Pfam" id="PF03136">
    <property type="entry name" value="Pup_ligase"/>
    <property type="match status" value="1"/>
</dbReference>
<dbReference type="PIRSF" id="PIRSF018077">
    <property type="entry name" value="UCP018077"/>
    <property type="match status" value="1"/>
</dbReference>
<reference key="1">
    <citation type="submission" date="2010-01" db="EMBL/GenBank/DDBJ databases">
        <title>The complete genome of Geodermatophilus obscurus DSM 43160.</title>
        <authorList>
            <consortium name="US DOE Joint Genome Institute (JGI-PGF)"/>
            <person name="Lucas S."/>
            <person name="Copeland A."/>
            <person name="Lapidus A."/>
            <person name="Glavina del Rio T."/>
            <person name="Dalin E."/>
            <person name="Tice H."/>
            <person name="Bruce D."/>
            <person name="Goodwin L."/>
            <person name="Pitluck S."/>
            <person name="Kyrpides N."/>
            <person name="Mavromatis K."/>
            <person name="Ivanova N."/>
            <person name="Munk A.C."/>
            <person name="Brettin T."/>
            <person name="Detter J.C."/>
            <person name="Han C."/>
            <person name="Larimer F."/>
            <person name="Land M."/>
            <person name="Hauser L."/>
            <person name="Markowitz V."/>
            <person name="Cheng J.-F."/>
            <person name="Hugenholtz P."/>
            <person name="Woyke T."/>
            <person name="Wu D."/>
            <person name="Jando M."/>
            <person name="Schneider S."/>
            <person name="Klenk H.-P."/>
            <person name="Eisen J.A."/>
        </authorList>
    </citation>
    <scope>NUCLEOTIDE SEQUENCE [LARGE SCALE GENOMIC DNA]</scope>
    <source>
        <strain>ATCC 25078 / DSM 43160 / JCM 3152 / CCUG 61914 / KCC A-0152 / KCTC 9177 / NBRC 13315 / NRRL B-3577 / G-20</strain>
    </source>
</reference>
<name>PAFA_GEOOG</name>